<evidence type="ECO:0000255" key="1">
    <source>
        <dbReference type="HAMAP-Rule" id="MF_00218"/>
    </source>
</evidence>
<reference key="1">
    <citation type="submission" date="2006-01" db="EMBL/GenBank/DDBJ databases">
        <title>Complete sequence of Rhodopseudomonas palustris HaA2.</title>
        <authorList>
            <consortium name="US DOE Joint Genome Institute"/>
            <person name="Copeland A."/>
            <person name="Lucas S."/>
            <person name="Lapidus A."/>
            <person name="Barry K."/>
            <person name="Detter J.C."/>
            <person name="Glavina T."/>
            <person name="Hammon N."/>
            <person name="Israni S."/>
            <person name="Pitluck S."/>
            <person name="Chain P."/>
            <person name="Malfatti S."/>
            <person name="Shin M."/>
            <person name="Vergez L."/>
            <person name="Schmutz J."/>
            <person name="Larimer F."/>
            <person name="Land M."/>
            <person name="Hauser L."/>
            <person name="Pelletier D.A."/>
            <person name="Kyrpides N."/>
            <person name="Anderson I."/>
            <person name="Oda Y."/>
            <person name="Harwood C.S."/>
            <person name="Richardson P."/>
        </authorList>
    </citation>
    <scope>NUCLEOTIDE SEQUENCE [LARGE SCALE GENOMIC DNA]</scope>
    <source>
        <strain>HaA2</strain>
    </source>
</reference>
<dbReference type="EC" id="4.1.1.37" evidence="1"/>
<dbReference type="EMBL" id="CP000250">
    <property type="protein sequence ID" value="ABD08707.1"/>
    <property type="molecule type" value="Genomic_DNA"/>
</dbReference>
<dbReference type="RefSeq" id="WP_011442891.1">
    <property type="nucleotide sequence ID" value="NC_007778.1"/>
</dbReference>
<dbReference type="SMR" id="Q2ISV3"/>
<dbReference type="STRING" id="316058.RPB_4014"/>
<dbReference type="KEGG" id="rpb:RPB_4014"/>
<dbReference type="eggNOG" id="COG0407">
    <property type="taxonomic scope" value="Bacteria"/>
</dbReference>
<dbReference type="HOGENOM" id="CLU_040933_0_0_5"/>
<dbReference type="UniPathway" id="UPA00251">
    <property type="reaction ID" value="UER00321"/>
</dbReference>
<dbReference type="Proteomes" id="UP000008809">
    <property type="component" value="Chromosome"/>
</dbReference>
<dbReference type="GO" id="GO:0005829">
    <property type="term" value="C:cytosol"/>
    <property type="evidence" value="ECO:0007669"/>
    <property type="project" value="TreeGrafter"/>
</dbReference>
<dbReference type="GO" id="GO:0004853">
    <property type="term" value="F:uroporphyrinogen decarboxylase activity"/>
    <property type="evidence" value="ECO:0007669"/>
    <property type="project" value="UniProtKB-UniRule"/>
</dbReference>
<dbReference type="GO" id="GO:0019353">
    <property type="term" value="P:protoporphyrinogen IX biosynthetic process from glutamate"/>
    <property type="evidence" value="ECO:0007669"/>
    <property type="project" value="TreeGrafter"/>
</dbReference>
<dbReference type="CDD" id="cd00717">
    <property type="entry name" value="URO-D"/>
    <property type="match status" value="1"/>
</dbReference>
<dbReference type="FunFam" id="3.20.20.210:FF:000007">
    <property type="entry name" value="Uroporphyrinogen decarboxylase"/>
    <property type="match status" value="1"/>
</dbReference>
<dbReference type="Gene3D" id="3.20.20.210">
    <property type="match status" value="1"/>
</dbReference>
<dbReference type="HAMAP" id="MF_00218">
    <property type="entry name" value="URO_D"/>
    <property type="match status" value="1"/>
</dbReference>
<dbReference type="InterPro" id="IPR038071">
    <property type="entry name" value="UROD/MetE-like_sf"/>
</dbReference>
<dbReference type="InterPro" id="IPR006361">
    <property type="entry name" value="Uroporphyrinogen_deCO2ase_HemE"/>
</dbReference>
<dbReference type="InterPro" id="IPR000257">
    <property type="entry name" value="Uroporphyrinogen_deCOase"/>
</dbReference>
<dbReference type="NCBIfam" id="TIGR01464">
    <property type="entry name" value="hemE"/>
    <property type="match status" value="1"/>
</dbReference>
<dbReference type="PANTHER" id="PTHR21091">
    <property type="entry name" value="METHYLTETRAHYDROFOLATE:HOMOCYSTEINE METHYLTRANSFERASE RELATED"/>
    <property type="match status" value="1"/>
</dbReference>
<dbReference type="PANTHER" id="PTHR21091:SF169">
    <property type="entry name" value="UROPORPHYRINOGEN DECARBOXYLASE"/>
    <property type="match status" value="1"/>
</dbReference>
<dbReference type="Pfam" id="PF01208">
    <property type="entry name" value="URO-D"/>
    <property type="match status" value="1"/>
</dbReference>
<dbReference type="SUPFAM" id="SSF51726">
    <property type="entry name" value="UROD/MetE-like"/>
    <property type="match status" value="1"/>
</dbReference>
<dbReference type="PROSITE" id="PS00906">
    <property type="entry name" value="UROD_1"/>
    <property type="match status" value="1"/>
</dbReference>
<dbReference type="PROSITE" id="PS00907">
    <property type="entry name" value="UROD_2"/>
    <property type="match status" value="1"/>
</dbReference>
<proteinExistence type="inferred from homology"/>
<keyword id="KW-0963">Cytoplasm</keyword>
<keyword id="KW-0210">Decarboxylase</keyword>
<keyword id="KW-0456">Lyase</keyword>
<keyword id="KW-0627">Porphyrin biosynthesis</keyword>
<keyword id="KW-1185">Reference proteome</keyword>
<organism>
    <name type="scientific">Rhodopseudomonas palustris (strain HaA2)</name>
    <dbReference type="NCBI Taxonomy" id="316058"/>
    <lineage>
        <taxon>Bacteria</taxon>
        <taxon>Pseudomonadati</taxon>
        <taxon>Pseudomonadota</taxon>
        <taxon>Alphaproteobacteria</taxon>
        <taxon>Hyphomicrobiales</taxon>
        <taxon>Nitrobacteraceae</taxon>
        <taxon>Rhodopseudomonas</taxon>
    </lineage>
</organism>
<gene>
    <name evidence="1" type="primary">hemE</name>
    <name type="ordered locus">RPB_4014</name>
</gene>
<accession>Q2ISV3</accession>
<comment type="function">
    <text evidence="1">Catalyzes the decarboxylation of four acetate groups of uroporphyrinogen-III to yield coproporphyrinogen-III.</text>
</comment>
<comment type="catalytic activity">
    <reaction evidence="1">
        <text>uroporphyrinogen III + 4 H(+) = coproporphyrinogen III + 4 CO2</text>
        <dbReference type="Rhea" id="RHEA:19865"/>
        <dbReference type="ChEBI" id="CHEBI:15378"/>
        <dbReference type="ChEBI" id="CHEBI:16526"/>
        <dbReference type="ChEBI" id="CHEBI:57308"/>
        <dbReference type="ChEBI" id="CHEBI:57309"/>
        <dbReference type="EC" id="4.1.1.37"/>
    </reaction>
</comment>
<comment type="pathway">
    <text evidence="1">Porphyrin-containing compound metabolism; protoporphyrin-IX biosynthesis; coproporphyrinogen-III from 5-aminolevulinate: step 4/4.</text>
</comment>
<comment type="subunit">
    <text evidence="1">Homodimer.</text>
</comment>
<comment type="subcellular location">
    <subcellularLocation>
        <location evidence="1">Cytoplasm</location>
    </subcellularLocation>
</comment>
<comment type="similarity">
    <text evidence="1">Belongs to the uroporphyrinogen decarboxylase family.</text>
</comment>
<sequence length="348" mass="38021">MTQKLVTKPFIEVLSGNRQASPPMWMMRQAGRYLPEYRATRAEAGSFLDLCFNAKLAAEVTLQPIRRFGFDAAIIFSDILVVPYALGRAVRFEVGEGPRLDPLNSPDLVGTLNGAIDLSKLEPVFEALRIVRSELAPETTLIGFCGAPFTVATYMVAGQGTSDQHPARLMAYQHPGAFARIIDVLVESSIQYLLKQLEAGADVLQIFDTWGGILPPREFEKWCIEPTRRIVEGVRKVSPGAKIIGFPRGAGAMLPDFIARTGVDAVSIDWTAEPNMIRERVQSKVAVQGNLDPLLLIAGGSALDQGVDDVLKNFSAGRHIFNLGHGITPDAPVAHVEQMVKRVRAYKG</sequence>
<name>DCUP_RHOP2</name>
<protein>
    <recommendedName>
        <fullName evidence="1">Uroporphyrinogen decarboxylase</fullName>
        <shortName evidence="1">UPD</shortName>
        <shortName evidence="1">URO-D</shortName>
        <ecNumber evidence="1">4.1.1.37</ecNumber>
    </recommendedName>
</protein>
<feature type="chain" id="PRO_0000325685" description="Uroporphyrinogen decarboxylase">
    <location>
        <begin position="1"/>
        <end position="348"/>
    </location>
</feature>
<feature type="binding site" evidence="1">
    <location>
        <begin position="28"/>
        <end position="32"/>
    </location>
    <ligand>
        <name>substrate</name>
    </ligand>
</feature>
<feature type="binding site" evidence="1">
    <location>
        <position position="78"/>
    </location>
    <ligand>
        <name>substrate</name>
    </ligand>
</feature>
<feature type="binding site" evidence="1">
    <location>
        <position position="154"/>
    </location>
    <ligand>
        <name>substrate</name>
    </ligand>
</feature>
<feature type="binding site" evidence="1">
    <location>
        <position position="209"/>
    </location>
    <ligand>
        <name>substrate</name>
    </ligand>
</feature>
<feature type="binding site" evidence="1">
    <location>
        <position position="325"/>
    </location>
    <ligand>
        <name>substrate</name>
    </ligand>
</feature>
<feature type="site" description="Transition state stabilizer" evidence="1">
    <location>
        <position position="78"/>
    </location>
</feature>